<keyword id="KW-0030">Aminoacyl-tRNA synthetase</keyword>
<keyword id="KW-0067">ATP-binding</keyword>
<keyword id="KW-0963">Cytoplasm</keyword>
<keyword id="KW-0436">Ligase</keyword>
<keyword id="KW-0460">Magnesium</keyword>
<keyword id="KW-0479">Metal-binding</keyword>
<keyword id="KW-0547">Nucleotide-binding</keyword>
<keyword id="KW-0648">Protein biosynthesis</keyword>
<dbReference type="EC" id="6.1.1.6" evidence="1"/>
<dbReference type="EMBL" id="CP001600">
    <property type="protein sequence ID" value="ACR70475.1"/>
    <property type="molecule type" value="Genomic_DNA"/>
</dbReference>
<dbReference type="RefSeq" id="WP_015872550.1">
    <property type="nucleotide sequence ID" value="NZ_CP169062.1"/>
</dbReference>
<dbReference type="SMR" id="C5BAR6"/>
<dbReference type="STRING" id="67780.B6E78_08375"/>
<dbReference type="GeneID" id="69540193"/>
<dbReference type="KEGG" id="eic:NT01EI_3337"/>
<dbReference type="PATRIC" id="fig|634503.3.peg.2965"/>
<dbReference type="HOGENOM" id="CLU_008255_6_0_6"/>
<dbReference type="OrthoDB" id="9801152at2"/>
<dbReference type="Proteomes" id="UP000001485">
    <property type="component" value="Chromosome"/>
</dbReference>
<dbReference type="GO" id="GO:0005829">
    <property type="term" value="C:cytosol"/>
    <property type="evidence" value="ECO:0007669"/>
    <property type="project" value="TreeGrafter"/>
</dbReference>
<dbReference type="GO" id="GO:0005524">
    <property type="term" value="F:ATP binding"/>
    <property type="evidence" value="ECO:0007669"/>
    <property type="project" value="UniProtKB-UniRule"/>
</dbReference>
<dbReference type="GO" id="GO:0004824">
    <property type="term" value="F:lysine-tRNA ligase activity"/>
    <property type="evidence" value="ECO:0007669"/>
    <property type="project" value="UniProtKB-UniRule"/>
</dbReference>
<dbReference type="GO" id="GO:0000287">
    <property type="term" value="F:magnesium ion binding"/>
    <property type="evidence" value="ECO:0007669"/>
    <property type="project" value="UniProtKB-UniRule"/>
</dbReference>
<dbReference type="GO" id="GO:0000049">
    <property type="term" value="F:tRNA binding"/>
    <property type="evidence" value="ECO:0007669"/>
    <property type="project" value="TreeGrafter"/>
</dbReference>
<dbReference type="GO" id="GO:0006430">
    <property type="term" value="P:lysyl-tRNA aminoacylation"/>
    <property type="evidence" value="ECO:0007669"/>
    <property type="project" value="UniProtKB-UniRule"/>
</dbReference>
<dbReference type="CDD" id="cd00775">
    <property type="entry name" value="LysRS_core"/>
    <property type="match status" value="1"/>
</dbReference>
<dbReference type="CDD" id="cd04322">
    <property type="entry name" value="LysRS_N"/>
    <property type="match status" value="1"/>
</dbReference>
<dbReference type="FunFam" id="2.40.50.140:FF:000024">
    <property type="entry name" value="Lysine--tRNA ligase"/>
    <property type="match status" value="1"/>
</dbReference>
<dbReference type="FunFam" id="3.30.930.10:FF:000001">
    <property type="entry name" value="Lysine--tRNA ligase"/>
    <property type="match status" value="1"/>
</dbReference>
<dbReference type="Gene3D" id="3.30.930.10">
    <property type="entry name" value="Bira Bifunctional Protein, Domain 2"/>
    <property type="match status" value="1"/>
</dbReference>
<dbReference type="Gene3D" id="2.40.50.140">
    <property type="entry name" value="Nucleic acid-binding proteins"/>
    <property type="match status" value="1"/>
</dbReference>
<dbReference type="HAMAP" id="MF_00252">
    <property type="entry name" value="Lys_tRNA_synth_class2"/>
    <property type="match status" value="1"/>
</dbReference>
<dbReference type="InterPro" id="IPR004364">
    <property type="entry name" value="Aa-tRNA-synt_II"/>
</dbReference>
<dbReference type="InterPro" id="IPR006195">
    <property type="entry name" value="aa-tRNA-synth_II"/>
</dbReference>
<dbReference type="InterPro" id="IPR045864">
    <property type="entry name" value="aa-tRNA-synth_II/BPL/LPL"/>
</dbReference>
<dbReference type="InterPro" id="IPR002313">
    <property type="entry name" value="Lys-tRNA-ligase_II"/>
</dbReference>
<dbReference type="InterPro" id="IPR034762">
    <property type="entry name" value="Lys-tRNA-ligase_II_bac/euk"/>
</dbReference>
<dbReference type="InterPro" id="IPR044136">
    <property type="entry name" value="Lys-tRNA-ligase_II_N"/>
</dbReference>
<dbReference type="InterPro" id="IPR018149">
    <property type="entry name" value="Lys-tRNA-synth_II_C"/>
</dbReference>
<dbReference type="InterPro" id="IPR012340">
    <property type="entry name" value="NA-bd_OB-fold"/>
</dbReference>
<dbReference type="InterPro" id="IPR004365">
    <property type="entry name" value="NA-bd_OB_tRNA"/>
</dbReference>
<dbReference type="NCBIfam" id="TIGR00499">
    <property type="entry name" value="lysS_bact"/>
    <property type="match status" value="1"/>
</dbReference>
<dbReference type="NCBIfam" id="NF001756">
    <property type="entry name" value="PRK00484.1"/>
    <property type="match status" value="1"/>
</dbReference>
<dbReference type="PANTHER" id="PTHR42918:SF15">
    <property type="entry name" value="LYSINE--TRNA LIGASE, CHLOROPLASTIC_MITOCHONDRIAL"/>
    <property type="match status" value="1"/>
</dbReference>
<dbReference type="PANTHER" id="PTHR42918">
    <property type="entry name" value="LYSYL-TRNA SYNTHETASE"/>
    <property type="match status" value="1"/>
</dbReference>
<dbReference type="Pfam" id="PF00152">
    <property type="entry name" value="tRNA-synt_2"/>
    <property type="match status" value="1"/>
</dbReference>
<dbReference type="Pfam" id="PF01336">
    <property type="entry name" value="tRNA_anti-codon"/>
    <property type="match status" value="1"/>
</dbReference>
<dbReference type="PIRSF" id="PIRSF039101">
    <property type="entry name" value="LysRS2"/>
    <property type="match status" value="1"/>
</dbReference>
<dbReference type="PRINTS" id="PR00982">
    <property type="entry name" value="TRNASYNTHLYS"/>
</dbReference>
<dbReference type="SUPFAM" id="SSF55681">
    <property type="entry name" value="Class II aaRS and biotin synthetases"/>
    <property type="match status" value="1"/>
</dbReference>
<dbReference type="SUPFAM" id="SSF50249">
    <property type="entry name" value="Nucleic acid-binding proteins"/>
    <property type="match status" value="1"/>
</dbReference>
<dbReference type="PROSITE" id="PS50862">
    <property type="entry name" value="AA_TRNA_LIGASE_II"/>
    <property type="match status" value="1"/>
</dbReference>
<proteinExistence type="inferred from homology"/>
<comment type="catalytic activity">
    <reaction evidence="1">
        <text>tRNA(Lys) + L-lysine + ATP = L-lysyl-tRNA(Lys) + AMP + diphosphate</text>
        <dbReference type="Rhea" id="RHEA:20792"/>
        <dbReference type="Rhea" id="RHEA-COMP:9696"/>
        <dbReference type="Rhea" id="RHEA-COMP:9697"/>
        <dbReference type="ChEBI" id="CHEBI:30616"/>
        <dbReference type="ChEBI" id="CHEBI:32551"/>
        <dbReference type="ChEBI" id="CHEBI:33019"/>
        <dbReference type="ChEBI" id="CHEBI:78442"/>
        <dbReference type="ChEBI" id="CHEBI:78529"/>
        <dbReference type="ChEBI" id="CHEBI:456215"/>
        <dbReference type="EC" id="6.1.1.6"/>
    </reaction>
</comment>
<comment type="cofactor">
    <cofactor evidence="1">
        <name>Mg(2+)</name>
        <dbReference type="ChEBI" id="CHEBI:18420"/>
    </cofactor>
    <text evidence="1">Binds 3 Mg(2+) ions per subunit.</text>
</comment>
<comment type="subunit">
    <text evidence="1">Homodimer.</text>
</comment>
<comment type="subcellular location">
    <subcellularLocation>
        <location evidence="1">Cytoplasm</location>
    </subcellularLocation>
</comment>
<comment type="similarity">
    <text evidence="1">Belongs to the class-II aminoacyl-tRNA synthetase family.</text>
</comment>
<accession>C5BAR6</accession>
<feature type="chain" id="PRO_1000204566" description="Lysine--tRNA ligase">
    <location>
        <begin position="1"/>
        <end position="505"/>
    </location>
</feature>
<feature type="binding site" evidence="1">
    <location>
        <position position="415"/>
    </location>
    <ligand>
        <name>Mg(2+)</name>
        <dbReference type="ChEBI" id="CHEBI:18420"/>
        <label>1</label>
    </ligand>
</feature>
<feature type="binding site" evidence="1">
    <location>
        <position position="422"/>
    </location>
    <ligand>
        <name>Mg(2+)</name>
        <dbReference type="ChEBI" id="CHEBI:18420"/>
        <label>1</label>
    </ligand>
</feature>
<feature type="binding site" evidence="1">
    <location>
        <position position="422"/>
    </location>
    <ligand>
        <name>Mg(2+)</name>
        <dbReference type="ChEBI" id="CHEBI:18420"/>
        <label>2</label>
    </ligand>
</feature>
<evidence type="ECO:0000255" key="1">
    <source>
        <dbReference type="HAMAP-Rule" id="MF_00252"/>
    </source>
</evidence>
<name>SYK_EDWI9</name>
<sequence>MSEQQQQGAEQALDLNNEMQARREKLAALRKEGIAFPNDFRRDTTSDKLHSLYDGKSKEELEALNVEVSVAGRMMTRRIMGKASFVTLQDMGGRIQLYVARDDLKDDVYSEQFKKWDLGDIIGARGTLFRTQTGELSIHCHSIHLLTKALRPLPDKFHGLSDQETRYRQRYLDLIANESSRETFRTRSKILAAIRNFMVNKGFMEVETPMMQVIPGGASARPFITHHNALDIDMYLRIAPELYLKRLVVGGFERVFEINRNFRNEGVSPRHNPEFTMMELYMAYADYKDLIVLTEELFRTISQDVLGSSVVQYGDQTFDFGKPFIKMSMKEAICHYRPDIASADLDDMDKACKIAESLGIKIEKSWGLGRVQCEIFDETAESQLIQPTFITEYPAEVSPLARRNDDNPFITDRFEFFIGGREIGNGFSELNDAEDQAERFQDQVKAKDAGDDEAMFYDEDYVTALEHGLPPTAGLGVGIDRMMMLFTNSHTIRDVILFPAMRPQK</sequence>
<protein>
    <recommendedName>
        <fullName evidence="1">Lysine--tRNA ligase</fullName>
        <ecNumber evidence="1">6.1.1.6</ecNumber>
    </recommendedName>
    <alternativeName>
        <fullName evidence="1">Lysyl-tRNA synthetase</fullName>
        <shortName evidence="1">LysRS</shortName>
    </alternativeName>
</protein>
<gene>
    <name evidence="1" type="primary">lysS</name>
    <name type="ordered locus">NT01EI_3337</name>
</gene>
<organism>
    <name type="scientific">Edwardsiella ictaluri (strain 93-146)</name>
    <dbReference type="NCBI Taxonomy" id="634503"/>
    <lineage>
        <taxon>Bacteria</taxon>
        <taxon>Pseudomonadati</taxon>
        <taxon>Pseudomonadota</taxon>
        <taxon>Gammaproteobacteria</taxon>
        <taxon>Enterobacterales</taxon>
        <taxon>Hafniaceae</taxon>
        <taxon>Edwardsiella</taxon>
    </lineage>
</organism>
<reference key="1">
    <citation type="submission" date="2009-03" db="EMBL/GenBank/DDBJ databases">
        <title>Complete genome sequence of Edwardsiella ictaluri 93-146.</title>
        <authorList>
            <person name="Williams M.L."/>
            <person name="Gillaspy A.F."/>
            <person name="Dyer D.W."/>
            <person name="Thune R.L."/>
            <person name="Waldbieser G.C."/>
            <person name="Schuster S.C."/>
            <person name="Gipson J."/>
            <person name="Zaitshik J."/>
            <person name="Landry C."/>
            <person name="Lawrence M.L."/>
        </authorList>
    </citation>
    <scope>NUCLEOTIDE SEQUENCE [LARGE SCALE GENOMIC DNA]</scope>
    <source>
        <strain>93-146</strain>
    </source>
</reference>